<accession>Q00722</accession>
<accession>A8K6J2</accession>
<accession>B9EGH5</accession>
<evidence type="ECO:0000250" key="1">
    <source>
        <dbReference type="UniProtKB" id="A3KGF7"/>
    </source>
</evidence>
<evidence type="ECO:0000255" key="2"/>
<evidence type="ECO:0000255" key="3">
    <source>
        <dbReference type="PROSITE-ProRule" id="PRU00041"/>
    </source>
</evidence>
<evidence type="ECO:0000255" key="4">
    <source>
        <dbReference type="PROSITE-ProRule" id="PRU00270"/>
    </source>
</evidence>
<evidence type="ECO:0000255" key="5">
    <source>
        <dbReference type="PROSITE-ProRule" id="PRU00271"/>
    </source>
</evidence>
<evidence type="ECO:0000256" key="6">
    <source>
        <dbReference type="SAM" id="MobiDB-lite"/>
    </source>
</evidence>
<evidence type="ECO:0000269" key="7">
    <source>
    </source>
</evidence>
<evidence type="ECO:0000269" key="8">
    <source>
    </source>
</evidence>
<evidence type="ECO:0000269" key="9">
    <source>
    </source>
</evidence>
<evidence type="ECO:0000269" key="10">
    <source>
    </source>
</evidence>
<evidence type="ECO:0000269" key="11">
    <source>
    </source>
</evidence>
<evidence type="ECO:0000303" key="12">
    <source>
    </source>
</evidence>
<evidence type="ECO:0000303" key="13">
    <source>
    </source>
</evidence>
<evidence type="ECO:0000305" key="14"/>
<evidence type="ECO:0000305" key="15">
    <source>
    </source>
</evidence>
<evidence type="ECO:0000305" key="16">
    <source>
    </source>
</evidence>
<evidence type="ECO:0000312" key="17">
    <source>
        <dbReference type="HGNC" id="HGNC:9055"/>
    </source>
</evidence>
<evidence type="ECO:0007744" key="18">
    <source>
    </source>
</evidence>
<evidence type="ECO:0007829" key="19">
    <source>
        <dbReference type="PDB" id="2FJU"/>
    </source>
</evidence>
<evidence type="ECO:0007829" key="20">
    <source>
        <dbReference type="PDB" id="2ZKM"/>
    </source>
</evidence>
<name>PLCB2_HUMAN</name>
<gene>
    <name evidence="17" type="primary">PLCB2</name>
</gene>
<sequence>MSLLNPVLLPPKVKAYLSQGERFIKWDDETTVASPVILRVDPKGYYLYWTYQSKEMEFLDITSIRDTRFGKFAKMPKSQKLRDVFNMDFPDNSFLLKTLTVVSGPDMVDLTFHNFVSYKENVGKAWAEDVLALVKHPLTANASRSTFLDKILVKLKMQLNSEGKIPVKNFFQMFPADRKRVEAALSACHLPKGKNDAINPEDFPEPVYKSFLMSLCPRPEIDEIFTSYHAKAKPYMTKEHLTKFINQKQRDSRLNSLLFPPARPDQVQGLIDKYEPSGINAQRGQLSPEGMVWFLCGPENSVLAQDKLLLHHDMTQPLNHYFINSSHNTYLTAGQFSGLSSAEMYRQVLLSGCRCVELDCWKGKPPDEEPIITHGFTMTTDIFFKEAIEAIAESAFKTSPYPIILSFENHVDSPRQQAKMAEYCRTIFGDMLLTEPLEKFPLKPGVPLPSPEDLRGKILIKNKKNQFSGPTSSSKDTGGEAEGSSPPSAPAGEGTVWAGEEGTELEEEEVEEEEEEESGNLDEEEIKKMQSDEGTAGLEVTAYEEMSSLVNYIQPTKFVSFEFSAQKNRSYVISSFTELKAYDLLSKASVQFVDYNKRQMSRIYPKGTRMDSSNYMPQMFWNAGCQMVALNFQTMDLPMQQNMAVFEFNGQSGYLLKHEFMRRPDKQFNPFSVDRIDVVVATTLSITVISGQFLSERSVRTYVEVELFGLPGDPKRRYRTKLSPSTNSINPVWKEEPFVFEKILMPELASLRVAVMEEGNKFLGHRIIPINALNSGYHHLCLHSESNMPLTMPALFIFLEMKDYIPGAWADLTVALANPIKFFSAHDTKSVKLKEAMGGLPEKPFPLASPVASQVNGALAPTSNGSPAARAGAREEAMKEAAEPRTASLEELRELKGVVKLQRRHEKELRELERRGARRWEELLQRGAAQLAELGPPGVGGVGACKLGPGKGSRKKRSLPREESAGAAPGEGPEGVDGRVRELKDRLELELLRQGEEQYECVLKRKEQHVAEQISKMMELAREKQAAELKALKETSENDTKEMKKKLETKRLERIQGMTKVTTDKMAQERLKREINNSHIQEVVQVIKQMTENLERHQEKLEEKQAACLEQIREMEKQFQKEALAEYEARMKGLEAEVKESVRACLRTCFPSEAKDKPERACECPPELCEQDPLIAKADAQESRL</sequence>
<proteinExistence type="evidence at protein level"/>
<feature type="chain" id="PRO_0000088489" description="1-phosphatidylinositol 4,5-bisphosphate phosphodiesterase beta-2">
    <location>
        <begin position="1"/>
        <end position="1185"/>
    </location>
</feature>
<feature type="domain" description="PI-PLC X-box" evidence="4">
    <location>
        <begin position="312"/>
        <end position="463"/>
    </location>
</feature>
<feature type="domain" description="PI-PLC Y-box" evidence="5">
    <location>
        <begin position="546"/>
        <end position="662"/>
    </location>
</feature>
<feature type="domain" description="C2" evidence="3">
    <location>
        <begin position="662"/>
        <end position="790"/>
    </location>
</feature>
<feature type="region of interest" description="Disordered" evidence="6">
    <location>
        <begin position="460"/>
        <end position="533"/>
    </location>
</feature>
<feature type="region of interest" description="Disordered" evidence="6">
    <location>
        <begin position="859"/>
        <end position="888"/>
    </location>
</feature>
<feature type="region of interest" description="Disordered" evidence="6">
    <location>
        <begin position="943"/>
        <end position="979"/>
    </location>
</feature>
<feature type="coiled-coil region" evidence="2">
    <location>
        <begin position="988"/>
        <end position="1147"/>
    </location>
</feature>
<feature type="compositionally biased region" description="Polar residues" evidence="6">
    <location>
        <begin position="465"/>
        <end position="476"/>
    </location>
</feature>
<feature type="compositionally biased region" description="Acidic residues" evidence="6">
    <location>
        <begin position="501"/>
        <end position="524"/>
    </location>
</feature>
<feature type="compositionally biased region" description="Basic and acidic residues" evidence="6">
    <location>
        <begin position="872"/>
        <end position="888"/>
    </location>
</feature>
<feature type="active site" evidence="4">
    <location>
        <position position="327"/>
    </location>
</feature>
<feature type="active site" evidence="4">
    <location>
        <position position="374"/>
    </location>
</feature>
<feature type="binding site">
    <location>
        <position position="328"/>
    </location>
    <ligand>
        <name>Ca(2+)</name>
        <dbReference type="ChEBI" id="CHEBI:29108"/>
    </ligand>
</feature>
<feature type="binding site">
    <location>
        <position position="357"/>
    </location>
    <ligand>
        <name>Ca(2+)</name>
        <dbReference type="ChEBI" id="CHEBI:29108"/>
    </ligand>
</feature>
<feature type="binding site">
    <location>
        <position position="359"/>
    </location>
    <ligand>
        <name>Ca(2+)</name>
        <dbReference type="ChEBI" id="CHEBI:29108"/>
    </ligand>
</feature>
<feature type="binding site">
    <location>
        <position position="408"/>
    </location>
    <ligand>
        <name>Ca(2+)</name>
        <dbReference type="ChEBI" id="CHEBI:29108"/>
    </ligand>
</feature>
<feature type="modified residue" description="Phosphoserine" evidence="18">
    <location>
        <position position="953"/>
    </location>
</feature>
<feature type="splice variant" id="VSP_035770" description="In isoform 2." evidence="13">
    <location>
        <begin position="492"/>
        <end position="495"/>
    </location>
</feature>
<feature type="splice variant" id="VSP_054490" description="In isoform 3." evidence="12">
    <location>
        <begin position="868"/>
        <end position="882"/>
    </location>
</feature>
<feature type="sequence variant" id="VAR_047509" description="In dbSNP:rs45628633.">
    <original>N</original>
    <variation>I</variation>
    <location>
        <position position="324"/>
    </location>
</feature>
<feature type="sequence variant" id="VAR_047510" description="In dbSNP:rs8025153.">
    <original>R</original>
    <variation>H</variation>
    <location>
        <position position="598"/>
    </location>
</feature>
<feature type="sequence variant" id="VAR_047511" description="In dbSNP:rs9972332.">
    <original>P</original>
    <variation>L</variation>
    <location>
        <position position="664"/>
    </location>
</feature>
<feature type="sequence variant" id="VAR_047512" description="In dbSNP:rs28395835.">
    <original>G</original>
    <variation>R</variation>
    <location>
        <position position="712"/>
    </location>
</feature>
<feature type="sequence variant" id="VAR_047513" description="In dbSNP:rs936212." evidence="7">
    <original>E</original>
    <variation>G</variation>
    <location>
        <position position="1095"/>
    </location>
</feature>
<feature type="mutagenesis site" description="Strongly reduces interaction with RAC1." evidence="9">
    <original>Q</original>
    <variation>A</variation>
    <location>
        <position position="52"/>
    </location>
</feature>
<feature type="sequence conflict" description="In Ref. 2; BAF84346." evidence="14" ref="2">
    <original>K</original>
    <variation>R</variation>
    <location>
        <position position="119"/>
    </location>
</feature>
<feature type="sequence conflict" description="In Ref. 2; BAF84346." evidence="14" ref="2">
    <original>K</original>
    <variation>R</variation>
    <location>
        <position position="1060"/>
    </location>
</feature>
<feature type="helix" evidence="20">
    <location>
        <begin position="15"/>
        <end position="19"/>
    </location>
</feature>
<feature type="strand" evidence="20">
    <location>
        <begin position="21"/>
        <end position="26"/>
    </location>
</feature>
<feature type="turn" evidence="20">
    <location>
        <begin position="28"/>
        <end position="30"/>
    </location>
</feature>
<feature type="strand" evidence="20">
    <location>
        <begin position="33"/>
        <end position="40"/>
    </location>
</feature>
<feature type="strand" evidence="20">
    <location>
        <begin position="46"/>
        <end position="51"/>
    </location>
</feature>
<feature type="strand" evidence="20">
    <location>
        <begin position="56"/>
        <end position="60"/>
    </location>
</feature>
<feature type="helix" evidence="20">
    <location>
        <begin position="61"/>
        <end position="63"/>
    </location>
</feature>
<feature type="strand" evidence="20">
    <location>
        <begin position="64"/>
        <end position="69"/>
    </location>
</feature>
<feature type="helix" evidence="20">
    <location>
        <begin position="70"/>
        <end position="72"/>
    </location>
</feature>
<feature type="helix" evidence="20">
    <location>
        <begin position="79"/>
        <end position="84"/>
    </location>
</feature>
<feature type="turn" evidence="19">
    <location>
        <begin position="85"/>
        <end position="88"/>
    </location>
</feature>
<feature type="helix" evidence="20">
    <location>
        <begin position="94"/>
        <end position="96"/>
    </location>
</feature>
<feature type="strand" evidence="20">
    <location>
        <begin position="98"/>
        <end position="103"/>
    </location>
</feature>
<feature type="strand" evidence="20">
    <location>
        <begin position="105"/>
        <end position="109"/>
    </location>
</feature>
<feature type="strand" evidence="20">
    <location>
        <begin position="111"/>
        <end position="121"/>
    </location>
</feature>
<feature type="helix" evidence="20">
    <location>
        <begin position="122"/>
        <end position="135"/>
    </location>
</feature>
<feature type="helix" evidence="20">
    <location>
        <begin position="139"/>
        <end position="141"/>
    </location>
</feature>
<feature type="helix" evidence="20">
    <location>
        <begin position="144"/>
        <end position="157"/>
    </location>
</feature>
<feature type="helix" evidence="20">
    <location>
        <begin position="167"/>
        <end position="173"/>
    </location>
</feature>
<feature type="helix" evidence="20">
    <location>
        <begin position="178"/>
        <end position="187"/>
    </location>
</feature>
<feature type="strand" evidence="19">
    <location>
        <begin position="193"/>
        <end position="195"/>
    </location>
</feature>
<feature type="helix" evidence="20">
    <location>
        <begin position="200"/>
        <end position="202"/>
    </location>
</feature>
<feature type="helix" evidence="20">
    <location>
        <begin position="205"/>
        <end position="215"/>
    </location>
</feature>
<feature type="helix" evidence="20">
    <location>
        <begin position="219"/>
        <end position="222"/>
    </location>
</feature>
<feature type="helix" evidence="20">
    <location>
        <begin position="238"/>
        <end position="247"/>
    </location>
</feature>
<feature type="helix" evidence="20">
    <location>
        <begin position="267"/>
        <end position="274"/>
    </location>
</feature>
<feature type="helix" evidence="20">
    <location>
        <begin position="288"/>
        <end position="296"/>
    </location>
</feature>
<feature type="helix" evidence="20">
    <location>
        <begin position="305"/>
        <end position="308"/>
    </location>
</feature>
<feature type="helix" evidence="20">
    <location>
        <begin position="318"/>
        <end position="320"/>
    </location>
</feature>
<feature type="strand" evidence="20">
    <location>
        <begin position="321"/>
        <end position="323"/>
    </location>
</feature>
<feature type="strand" evidence="20">
    <location>
        <begin position="325"/>
        <end position="328"/>
    </location>
</feature>
<feature type="strand" evidence="20">
    <location>
        <begin position="331"/>
        <end position="333"/>
    </location>
</feature>
<feature type="strand" evidence="20">
    <location>
        <begin position="335"/>
        <end position="338"/>
    </location>
</feature>
<feature type="helix" evidence="20">
    <location>
        <begin position="343"/>
        <end position="350"/>
    </location>
</feature>
<feature type="strand" evidence="20">
    <location>
        <begin position="355"/>
        <end position="361"/>
    </location>
</feature>
<feature type="turn" evidence="19">
    <location>
        <begin position="365"/>
        <end position="368"/>
    </location>
</feature>
<feature type="helix" evidence="20">
    <location>
        <begin position="384"/>
        <end position="394"/>
    </location>
</feature>
<feature type="turn" evidence="19">
    <location>
        <begin position="395"/>
        <end position="397"/>
    </location>
</feature>
<feature type="strand" evidence="20">
    <location>
        <begin position="403"/>
        <end position="409"/>
    </location>
</feature>
<feature type="helix" evidence="20">
    <location>
        <begin position="414"/>
        <end position="428"/>
    </location>
</feature>
<feature type="helix" evidence="20">
    <location>
        <begin position="429"/>
        <end position="431"/>
    </location>
</feature>
<feature type="turn" evidence="20">
    <location>
        <begin position="451"/>
        <end position="456"/>
    </location>
</feature>
<feature type="strand" evidence="20">
    <location>
        <begin position="458"/>
        <end position="461"/>
    </location>
</feature>
<feature type="helix" evidence="20">
    <location>
        <begin position="523"/>
        <end position="531"/>
    </location>
</feature>
<feature type="helix" evidence="20">
    <location>
        <begin position="534"/>
        <end position="538"/>
    </location>
</feature>
<feature type="helix" evidence="20">
    <location>
        <begin position="544"/>
        <end position="547"/>
    </location>
</feature>
<feature type="helix" evidence="20">
    <location>
        <begin position="561"/>
        <end position="567"/>
    </location>
</feature>
<feature type="strand" evidence="20">
    <location>
        <begin position="572"/>
        <end position="577"/>
    </location>
</feature>
<feature type="helix" evidence="20">
    <location>
        <begin position="578"/>
        <end position="587"/>
    </location>
</feature>
<feature type="helix" evidence="20">
    <location>
        <begin position="589"/>
        <end position="598"/>
    </location>
</feature>
<feature type="strand" evidence="20">
    <location>
        <begin position="599"/>
        <end position="604"/>
    </location>
</feature>
<feature type="helix" evidence="20">
    <location>
        <begin position="618"/>
        <end position="622"/>
    </location>
</feature>
<feature type="strand" evidence="20">
    <location>
        <begin position="626"/>
        <end position="628"/>
    </location>
</feature>
<feature type="helix" evidence="20">
    <location>
        <begin position="637"/>
        <end position="645"/>
    </location>
</feature>
<feature type="turn" evidence="20">
    <location>
        <begin position="646"/>
        <end position="648"/>
    </location>
</feature>
<feature type="helix" evidence="20">
    <location>
        <begin position="649"/>
        <end position="651"/>
    </location>
</feature>
<feature type="strand" evidence="20">
    <location>
        <begin position="653"/>
        <end position="656"/>
    </location>
</feature>
<feature type="helix" evidence="20">
    <location>
        <begin position="659"/>
        <end position="661"/>
    </location>
</feature>
<feature type="turn" evidence="20">
    <location>
        <begin position="675"/>
        <end position="680"/>
    </location>
</feature>
<feature type="strand" evidence="20">
    <location>
        <begin position="682"/>
        <end position="693"/>
    </location>
</feature>
<feature type="strand" evidence="20">
    <location>
        <begin position="701"/>
        <end position="708"/>
    </location>
</feature>
<feature type="strand" evidence="20">
    <location>
        <begin position="724"/>
        <end position="726"/>
    </location>
</feature>
<feature type="strand" evidence="20">
    <location>
        <begin position="738"/>
        <end position="745"/>
    </location>
</feature>
<feature type="helix" evidence="20">
    <location>
        <begin position="746"/>
        <end position="748"/>
    </location>
</feature>
<feature type="strand" evidence="20">
    <location>
        <begin position="750"/>
        <end position="757"/>
    </location>
</feature>
<feature type="turn" evidence="20">
    <location>
        <begin position="758"/>
        <end position="760"/>
    </location>
</feature>
<feature type="strand" evidence="20">
    <location>
        <begin position="761"/>
        <end position="769"/>
    </location>
</feature>
<feature type="helix" evidence="20">
    <location>
        <begin position="770"/>
        <end position="772"/>
    </location>
</feature>
<feature type="strand" evidence="20">
    <location>
        <begin position="776"/>
        <end position="783"/>
    </location>
</feature>
<feature type="strand" evidence="20">
    <location>
        <begin position="789"/>
        <end position="802"/>
    </location>
</feature>
<protein>
    <recommendedName>
        <fullName evidence="14">1-phosphatidylinositol 4,5-bisphosphate phosphodiesterase beta-2</fullName>
        <ecNumber evidence="11">3.1.4.11</ecNumber>
    </recommendedName>
    <alternativeName>
        <fullName>Phosphoinositide phospholipase C-beta-2</fullName>
    </alternativeName>
    <alternativeName>
        <fullName>Phospholipase C-beta-2</fullName>
        <shortName>PLC-beta-2</shortName>
    </alternativeName>
</protein>
<reference key="1">
    <citation type="journal article" date="1992" name="J. Biol. Chem.">
        <title>Cloning, sequencing, expression, and Gq-independent activation of phospholipase C-beta 2.</title>
        <authorList>
            <person name="Park D."/>
            <person name="Jhon D.-Y."/>
            <person name="Kriz R."/>
            <person name="Knopf J."/>
            <person name="Rhee S.G."/>
        </authorList>
    </citation>
    <scope>NUCLEOTIDE SEQUENCE [MRNA] (ISOFORM 2)</scope>
    <scope>INTERACTION WITH RAC1</scope>
    <scope>CATALYTIC ACTIVITY</scope>
</reference>
<reference key="2">
    <citation type="journal article" date="2004" name="Nat. Genet.">
        <title>Complete sequencing and characterization of 21,243 full-length human cDNAs.</title>
        <authorList>
            <person name="Ota T."/>
            <person name="Suzuki Y."/>
            <person name="Nishikawa T."/>
            <person name="Otsuki T."/>
            <person name="Sugiyama T."/>
            <person name="Irie R."/>
            <person name="Wakamatsu A."/>
            <person name="Hayashi K."/>
            <person name="Sato H."/>
            <person name="Nagai K."/>
            <person name="Kimura K."/>
            <person name="Makita H."/>
            <person name="Sekine M."/>
            <person name="Obayashi M."/>
            <person name="Nishi T."/>
            <person name="Shibahara T."/>
            <person name="Tanaka T."/>
            <person name="Ishii S."/>
            <person name="Yamamoto J."/>
            <person name="Saito K."/>
            <person name="Kawai Y."/>
            <person name="Isono Y."/>
            <person name="Nakamura Y."/>
            <person name="Nagahari K."/>
            <person name="Murakami K."/>
            <person name="Yasuda T."/>
            <person name="Iwayanagi T."/>
            <person name="Wagatsuma M."/>
            <person name="Shiratori A."/>
            <person name="Sudo H."/>
            <person name="Hosoiri T."/>
            <person name="Kaku Y."/>
            <person name="Kodaira H."/>
            <person name="Kondo H."/>
            <person name="Sugawara M."/>
            <person name="Takahashi M."/>
            <person name="Kanda K."/>
            <person name="Yokoi T."/>
            <person name="Furuya T."/>
            <person name="Kikkawa E."/>
            <person name="Omura Y."/>
            <person name="Abe K."/>
            <person name="Kamihara K."/>
            <person name="Katsuta N."/>
            <person name="Sato K."/>
            <person name="Tanikawa M."/>
            <person name="Yamazaki M."/>
            <person name="Ninomiya K."/>
            <person name="Ishibashi T."/>
            <person name="Yamashita H."/>
            <person name="Murakawa K."/>
            <person name="Fujimori K."/>
            <person name="Tanai H."/>
            <person name="Kimata M."/>
            <person name="Watanabe M."/>
            <person name="Hiraoka S."/>
            <person name="Chiba Y."/>
            <person name="Ishida S."/>
            <person name="Ono Y."/>
            <person name="Takiguchi S."/>
            <person name="Watanabe S."/>
            <person name="Yosida M."/>
            <person name="Hotuta T."/>
            <person name="Kusano J."/>
            <person name="Kanehori K."/>
            <person name="Takahashi-Fujii A."/>
            <person name="Hara H."/>
            <person name="Tanase T.-O."/>
            <person name="Nomura Y."/>
            <person name="Togiya S."/>
            <person name="Komai F."/>
            <person name="Hara R."/>
            <person name="Takeuchi K."/>
            <person name="Arita M."/>
            <person name="Imose N."/>
            <person name="Musashino K."/>
            <person name="Yuuki H."/>
            <person name="Oshima A."/>
            <person name="Sasaki N."/>
            <person name="Aotsuka S."/>
            <person name="Yoshikawa Y."/>
            <person name="Matsunawa H."/>
            <person name="Ichihara T."/>
            <person name="Shiohata N."/>
            <person name="Sano S."/>
            <person name="Moriya S."/>
            <person name="Momiyama H."/>
            <person name="Satoh N."/>
            <person name="Takami S."/>
            <person name="Terashima Y."/>
            <person name="Suzuki O."/>
            <person name="Nakagawa S."/>
            <person name="Senoh A."/>
            <person name="Mizoguchi H."/>
            <person name="Goto Y."/>
            <person name="Shimizu F."/>
            <person name="Wakebe H."/>
            <person name="Hishigaki H."/>
            <person name="Watanabe T."/>
            <person name="Sugiyama A."/>
            <person name="Takemoto M."/>
            <person name="Kawakami B."/>
            <person name="Yamazaki M."/>
            <person name="Watanabe K."/>
            <person name="Kumagai A."/>
            <person name="Itakura S."/>
            <person name="Fukuzumi Y."/>
            <person name="Fujimori Y."/>
            <person name="Komiyama M."/>
            <person name="Tashiro H."/>
            <person name="Tanigami A."/>
            <person name="Fujiwara T."/>
            <person name="Ono T."/>
            <person name="Yamada K."/>
            <person name="Fujii Y."/>
            <person name="Ozaki K."/>
            <person name="Hirao M."/>
            <person name="Ohmori Y."/>
            <person name="Kawabata A."/>
            <person name="Hikiji T."/>
            <person name="Kobatake N."/>
            <person name="Inagaki H."/>
            <person name="Ikema Y."/>
            <person name="Okamoto S."/>
            <person name="Okitani R."/>
            <person name="Kawakami T."/>
            <person name="Noguchi S."/>
            <person name="Itoh T."/>
            <person name="Shigeta K."/>
            <person name="Senba T."/>
            <person name="Matsumura K."/>
            <person name="Nakajima Y."/>
            <person name="Mizuno T."/>
            <person name="Morinaga M."/>
            <person name="Sasaki M."/>
            <person name="Togashi T."/>
            <person name="Oyama M."/>
            <person name="Hata H."/>
            <person name="Watanabe M."/>
            <person name="Komatsu T."/>
            <person name="Mizushima-Sugano J."/>
            <person name="Satoh T."/>
            <person name="Shirai Y."/>
            <person name="Takahashi Y."/>
            <person name="Nakagawa K."/>
            <person name="Okumura K."/>
            <person name="Nagase T."/>
            <person name="Nomura N."/>
            <person name="Kikuchi H."/>
            <person name="Masuho Y."/>
            <person name="Yamashita R."/>
            <person name="Nakai K."/>
            <person name="Yada T."/>
            <person name="Nakamura Y."/>
            <person name="Ohara O."/>
            <person name="Isogai T."/>
            <person name="Sugano S."/>
        </authorList>
    </citation>
    <scope>NUCLEOTIDE SEQUENCE [LARGE SCALE MRNA] (ISOFORM 1)</scope>
    <scope>VARIANT GLY-1095</scope>
    <source>
        <tissue>Placenta</tissue>
    </source>
</reference>
<reference key="3">
    <citation type="journal article" date="2006" name="Nature">
        <title>Analysis of the DNA sequence and duplication history of human chromosome 15.</title>
        <authorList>
            <person name="Zody M.C."/>
            <person name="Garber M."/>
            <person name="Sharpe T."/>
            <person name="Young S.K."/>
            <person name="Rowen L."/>
            <person name="O'Neill K."/>
            <person name="Whittaker C.A."/>
            <person name="Kamal M."/>
            <person name="Chang J.L."/>
            <person name="Cuomo C.A."/>
            <person name="Dewar K."/>
            <person name="FitzGerald M.G."/>
            <person name="Kodira C.D."/>
            <person name="Madan A."/>
            <person name="Qin S."/>
            <person name="Yang X."/>
            <person name="Abbasi N."/>
            <person name="Abouelleil A."/>
            <person name="Arachchi H.M."/>
            <person name="Baradarani L."/>
            <person name="Birditt B."/>
            <person name="Bloom S."/>
            <person name="Bloom T."/>
            <person name="Borowsky M.L."/>
            <person name="Burke J."/>
            <person name="Butler J."/>
            <person name="Cook A."/>
            <person name="DeArellano K."/>
            <person name="DeCaprio D."/>
            <person name="Dorris L. III"/>
            <person name="Dors M."/>
            <person name="Eichler E.E."/>
            <person name="Engels R."/>
            <person name="Fahey J."/>
            <person name="Fleetwood P."/>
            <person name="Friedman C."/>
            <person name="Gearin G."/>
            <person name="Hall J.L."/>
            <person name="Hensley G."/>
            <person name="Johnson E."/>
            <person name="Jones C."/>
            <person name="Kamat A."/>
            <person name="Kaur A."/>
            <person name="Locke D.P."/>
            <person name="Madan A."/>
            <person name="Munson G."/>
            <person name="Jaffe D.B."/>
            <person name="Lui A."/>
            <person name="Macdonald P."/>
            <person name="Mauceli E."/>
            <person name="Naylor J.W."/>
            <person name="Nesbitt R."/>
            <person name="Nicol R."/>
            <person name="O'Leary S.B."/>
            <person name="Ratcliffe A."/>
            <person name="Rounsley S."/>
            <person name="She X."/>
            <person name="Sneddon K.M.B."/>
            <person name="Stewart S."/>
            <person name="Sougnez C."/>
            <person name="Stone S.M."/>
            <person name="Topham K."/>
            <person name="Vincent D."/>
            <person name="Wang S."/>
            <person name="Zimmer A.R."/>
            <person name="Birren B.W."/>
            <person name="Hood L."/>
            <person name="Lander E.S."/>
            <person name="Nusbaum C."/>
        </authorList>
    </citation>
    <scope>NUCLEOTIDE SEQUENCE [LARGE SCALE GENOMIC DNA]</scope>
</reference>
<reference key="4">
    <citation type="journal article" date="2004" name="Genome Res.">
        <title>The status, quality, and expansion of the NIH full-length cDNA project: the Mammalian Gene Collection (MGC).</title>
        <authorList>
            <consortium name="The MGC Project Team"/>
        </authorList>
    </citation>
    <scope>NUCLEOTIDE SEQUENCE [LARGE SCALE MRNA] (ISOFORM 3)</scope>
    <source>
        <tissue>Testis</tissue>
    </source>
</reference>
<reference key="5">
    <citation type="journal article" date="1997" name="Biochemistry">
        <title>Phosphoinositide binding specificity among phospholipase C isozymes as determined by photo-cross-linking to novel substrate and product analogs.</title>
        <authorList>
            <person name="Tall E."/>
            <person name="Dorman G."/>
            <person name="Garcia P."/>
            <person name="Runnels L."/>
            <person name="Shah S."/>
            <person name="Chen J."/>
            <person name="Profit A."/>
            <person name="Gu Q.M."/>
            <person name="Chaudhary A."/>
            <person name="Prestwich G.D."/>
            <person name="Rebecchi M.J."/>
        </authorList>
    </citation>
    <scope>FUNCTION</scope>
    <scope>CATALYTIC ACTIVITY</scope>
</reference>
<reference key="6">
    <citation type="journal article" date="2013" name="J. Biol. Chem.">
        <title>WDR26 functions as a scaffolding protein to promote Gbetagamma-mediated phospholipase C beta2 (PLCbeta2) activation in leukocytes.</title>
        <authorList>
            <person name="Sun Z."/>
            <person name="Smrcka A.V."/>
            <person name="Chen S."/>
        </authorList>
    </citation>
    <scope>INTERACTION WITH WDR26 AND A G-BETA:GAMMA UNIT</scope>
</reference>
<reference key="7">
    <citation type="journal article" date="2014" name="J. Proteomics">
        <title>An enzyme assisted RP-RPLC approach for in-depth analysis of human liver phosphoproteome.</title>
        <authorList>
            <person name="Bian Y."/>
            <person name="Song C."/>
            <person name="Cheng K."/>
            <person name="Dong M."/>
            <person name="Wang F."/>
            <person name="Huang J."/>
            <person name="Sun D."/>
            <person name="Wang L."/>
            <person name="Ye M."/>
            <person name="Zou H."/>
        </authorList>
    </citation>
    <scope>PHOSPHORYLATION [LARGE SCALE ANALYSIS] AT SER-953</scope>
    <scope>IDENTIFICATION BY MASS SPECTROMETRY [LARGE SCALE ANALYSIS]</scope>
    <source>
        <tissue>Liver</tissue>
    </source>
</reference>
<reference key="8">
    <citation type="journal article" date="2006" name="Nat. Struct. Mol. Biol.">
        <title>Crystal structure of Rac1 bound to its effector phospholipase C-beta2.</title>
        <authorList>
            <person name="Jezyk M.R."/>
            <person name="Snyder J.T."/>
            <person name="Gershberg S."/>
            <person name="Worthylake D.K."/>
            <person name="Harden T.K."/>
            <person name="Sondek J."/>
        </authorList>
    </citation>
    <scope>X-RAY CRYSTALLOGRAPHY (2.2 ANGSTROMS) OF 1-803 (ISOFORM 2) IN COMPLEX WITH RAC1</scope>
    <scope>MUTAGENESIS OF GLN-52</scope>
</reference>
<dbReference type="EC" id="3.1.4.11" evidence="11"/>
<dbReference type="EMBL" id="M95678">
    <property type="protein sequence ID" value="AAA36453.1"/>
    <property type="molecule type" value="mRNA"/>
</dbReference>
<dbReference type="EMBL" id="AK291657">
    <property type="protein sequence ID" value="BAF84346.1"/>
    <property type="molecule type" value="mRNA"/>
</dbReference>
<dbReference type="EMBL" id="AC020658">
    <property type="status" value="NOT_ANNOTATED_CDS"/>
    <property type="molecule type" value="Genomic_DNA"/>
</dbReference>
<dbReference type="EMBL" id="BC136467">
    <property type="protein sequence ID" value="AAI36468.1"/>
    <property type="molecule type" value="mRNA"/>
</dbReference>
<dbReference type="CCDS" id="CCDS42020.1">
    <molecule id="Q00722-1"/>
</dbReference>
<dbReference type="CCDS" id="CCDS61591.1">
    <molecule id="Q00722-3"/>
</dbReference>
<dbReference type="CCDS" id="CCDS61592.1">
    <molecule id="Q00722-2"/>
</dbReference>
<dbReference type="PIR" id="A43346">
    <property type="entry name" value="A43346"/>
</dbReference>
<dbReference type="RefSeq" id="NP_001271226.1">
    <molecule id="Q00722-2"/>
    <property type="nucleotide sequence ID" value="NM_001284297.2"/>
</dbReference>
<dbReference type="RefSeq" id="NP_001271227.1">
    <molecule id="Q00722-3"/>
    <property type="nucleotide sequence ID" value="NM_001284298.2"/>
</dbReference>
<dbReference type="RefSeq" id="NP_004564.2">
    <molecule id="Q00722-1"/>
    <property type="nucleotide sequence ID" value="NM_004573.3"/>
</dbReference>
<dbReference type="PDB" id="2FJU">
    <property type="method" value="X-ray"/>
    <property type="resolution" value="2.20 A"/>
    <property type="chains" value="B=1-803"/>
</dbReference>
<dbReference type="PDB" id="2ZKM">
    <property type="method" value="X-ray"/>
    <property type="resolution" value="1.62 A"/>
    <property type="chains" value="X=1-803"/>
</dbReference>
<dbReference type="PDBsum" id="2FJU"/>
<dbReference type="PDBsum" id="2ZKM"/>
<dbReference type="SMR" id="Q00722"/>
<dbReference type="BioGRID" id="111346">
    <property type="interactions" value="19"/>
</dbReference>
<dbReference type="DIP" id="DIP-29259N"/>
<dbReference type="FunCoup" id="Q00722">
    <property type="interactions" value="2342"/>
</dbReference>
<dbReference type="IntAct" id="Q00722">
    <property type="interactions" value="4"/>
</dbReference>
<dbReference type="STRING" id="9606.ENSP00000260402"/>
<dbReference type="SwissLipids" id="SLP:000000948"/>
<dbReference type="GlyGen" id="Q00722">
    <property type="glycosylation" value="3 sites, 1 O-linked glycan (2 sites)"/>
</dbReference>
<dbReference type="iPTMnet" id="Q00722"/>
<dbReference type="MetOSite" id="Q00722"/>
<dbReference type="PhosphoSitePlus" id="Q00722"/>
<dbReference type="BioMuta" id="PLCB2"/>
<dbReference type="DMDM" id="215273902"/>
<dbReference type="jPOST" id="Q00722"/>
<dbReference type="MassIVE" id="Q00722"/>
<dbReference type="PaxDb" id="9606-ENSP00000260402"/>
<dbReference type="PeptideAtlas" id="Q00722"/>
<dbReference type="ProteomicsDB" id="57870">
    <molecule id="Q00722-1"/>
</dbReference>
<dbReference type="ProteomicsDB" id="57871">
    <molecule id="Q00722-2"/>
</dbReference>
<dbReference type="ProteomicsDB" id="7525"/>
<dbReference type="Pumba" id="Q00722"/>
<dbReference type="Antibodypedia" id="4002">
    <property type="antibodies" value="183 antibodies from 28 providers"/>
</dbReference>
<dbReference type="DNASU" id="5330"/>
<dbReference type="Ensembl" id="ENST00000260402.8">
    <molecule id="Q00722-1"/>
    <property type="protein sequence ID" value="ENSP00000260402.3"/>
    <property type="gene ID" value="ENSG00000137841.12"/>
</dbReference>
<dbReference type="Ensembl" id="ENST00000456256.6">
    <molecule id="Q00722-3"/>
    <property type="protein sequence ID" value="ENSP00000411991.2"/>
    <property type="gene ID" value="ENSG00000137841.12"/>
</dbReference>
<dbReference type="Ensembl" id="ENST00000557821.5">
    <molecule id="Q00722-2"/>
    <property type="protein sequence ID" value="ENSP00000453975.1"/>
    <property type="gene ID" value="ENSG00000137841.12"/>
</dbReference>
<dbReference type="GeneID" id="5330"/>
<dbReference type="KEGG" id="hsa:5330"/>
<dbReference type="MANE-Select" id="ENST00000260402.8">
    <property type="protein sequence ID" value="ENSP00000260402.3"/>
    <property type="RefSeq nucleotide sequence ID" value="NM_004573.3"/>
    <property type="RefSeq protein sequence ID" value="NP_004564.2"/>
</dbReference>
<dbReference type="UCSC" id="uc001zld.4">
    <molecule id="Q00722-1"/>
    <property type="organism name" value="human"/>
</dbReference>
<dbReference type="AGR" id="HGNC:9055"/>
<dbReference type="CTD" id="5330"/>
<dbReference type="DisGeNET" id="5330"/>
<dbReference type="GeneCards" id="PLCB2"/>
<dbReference type="HGNC" id="HGNC:9055">
    <property type="gene designation" value="PLCB2"/>
</dbReference>
<dbReference type="HPA" id="ENSG00000137841">
    <property type="expression patterns" value="Tissue enhanced (bone marrow, lymphoid tissue)"/>
</dbReference>
<dbReference type="MIM" id="604114">
    <property type="type" value="gene"/>
</dbReference>
<dbReference type="neXtProt" id="NX_Q00722"/>
<dbReference type="OpenTargets" id="ENSG00000137841"/>
<dbReference type="PharmGKB" id="PA33385"/>
<dbReference type="VEuPathDB" id="HostDB:ENSG00000137841"/>
<dbReference type="eggNOG" id="KOG1265">
    <property type="taxonomic scope" value="Eukaryota"/>
</dbReference>
<dbReference type="GeneTree" id="ENSGT00940000159326"/>
<dbReference type="HOGENOM" id="CLU_002738_2_0_1"/>
<dbReference type="InParanoid" id="Q00722"/>
<dbReference type="OMA" id="ERCEHTY"/>
<dbReference type="OrthoDB" id="269822at2759"/>
<dbReference type="PAN-GO" id="Q00722">
    <property type="GO annotations" value="2 GO annotations based on evolutionary models"/>
</dbReference>
<dbReference type="PhylomeDB" id="Q00722"/>
<dbReference type="TreeFam" id="TF313216"/>
<dbReference type="BioCyc" id="MetaCyc:HS06408-MONOMER"/>
<dbReference type="BRENDA" id="3.1.4.11">
    <property type="organism ID" value="2681"/>
</dbReference>
<dbReference type="PathwayCommons" id="Q00722"/>
<dbReference type="Reactome" id="R-HSA-112043">
    <property type="pathway name" value="PLC beta mediated events"/>
</dbReference>
<dbReference type="Reactome" id="R-HSA-1855204">
    <property type="pathway name" value="Synthesis of IP3 and IP4 in the cytosol"/>
</dbReference>
<dbReference type="Reactome" id="R-HSA-399997">
    <property type="pathway name" value="Acetylcholine regulates insulin secretion"/>
</dbReference>
<dbReference type="Reactome" id="R-HSA-4086398">
    <property type="pathway name" value="Ca2+ pathway"/>
</dbReference>
<dbReference type="Reactome" id="R-HSA-416476">
    <property type="pathway name" value="G alpha (q) signalling events"/>
</dbReference>
<dbReference type="Reactome" id="R-HSA-418217">
    <property type="pathway name" value="G beta:gamma signalling through PLC beta"/>
</dbReference>
<dbReference type="Reactome" id="R-HSA-434316">
    <property type="pathway name" value="Fatty Acids bound to GPR40 (FFAR1) regulate insulin secretion"/>
</dbReference>
<dbReference type="Reactome" id="R-HSA-500657">
    <property type="pathway name" value="Presynaptic function of Kainate receptors"/>
</dbReference>
<dbReference type="Reactome" id="R-HSA-9717207">
    <property type="pathway name" value="Sensory perception of sweet, bitter, and umami (glutamate) taste"/>
</dbReference>
<dbReference type="SABIO-RK" id="Q00722"/>
<dbReference type="SignaLink" id="Q00722"/>
<dbReference type="SIGNOR" id="Q00722"/>
<dbReference type="BioGRID-ORCS" id="5330">
    <property type="hits" value="15 hits in 1160 CRISPR screens"/>
</dbReference>
<dbReference type="ChiTaRS" id="PLCB2">
    <property type="organism name" value="human"/>
</dbReference>
<dbReference type="EvolutionaryTrace" id="Q00722"/>
<dbReference type="GeneWiki" id="PLCB2"/>
<dbReference type="GenomeRNAi" id="5330"/>
<dbReference type="Pharos" id="Q00722">
    <property type="development level" value="Tbio"/>
</dbReference>
<dbReference type="PRO" id="PR:Q00722"/>
<dbReference type="Proteomes" id="UP000005640">
    <property type="component" value="Chromosome 15"/>
</dbReference>
<dbReference type="RNAct" id="Q00722">
    <property type="molecule type" value="protein"/>
</dbReference>
<dbReference type="Bgee" id="ENSG00000137841">
    <property type="expression patterns" value="Expressed in granulocyte and 116 other cell types or tissues"/>
</dbReference>
<dbReference type="ExpressionAtlas" id="Q00722">
    <property type="expression patterns" value="baseline and differential"/>
</dbReference>
<dbReference type="GO" id="GO:0005737">
    <property type="term" value="C:cytoplasm"/>
    <property type="evidence" value="ECO:0000318"/>
    <property type="project" value="GO_Central"/>
</dbReference>
<dbReference type="GO" id="GO:0005829">
    <property type="term" value="C:cytosol"/>
    <property type="evidence" value="ECO:0000304"/>
    <property type="project" value="Reactome"/>
</dbReference>
<dbReference type="GO" id="GO:0031680">
    <property type="term" value="C:G-protein beta/gamma-subunit complex"/>
    <property type="evidence" value="ECO:0007669"/>
    <property type="project" value="Ensembl"/>
</dbReference>
<dbReference type="GO" id="GO:0098992">
    <property type="term" value="C:neuronal dense core vesicle"/>
    <property type="evidence" value="ECO:0007669"/>
    <property type="project" value="Ensembl"/>
</dbReference>
<dbReference type="GO" id="GO:0005509">
    <property type="term" value="F:calcium ion binding"/>
    <property type="evidence" value="ECO:0007669"/>
    <property type="project" value="InterPro"/>
</dbReference>
<dbReference type="GO" id="GO:0031683">
    <property type="term" value="F:G-protein beta/gamma-subunit complex binding"/>
    <property type="evidence" value="ECO:0007669"/>
    <property type="project" value="Ensembl"/>
</dbReference>
<dbReference type="GO" id="GO:0004435">
    <property type="term" value="F:phosphatidylinositol-4,5-bisphosphate phospholipase C activity"/>
    <property type="evidence" value="ECO:0000314"/>
    <property type="project" value="UniProtKB"/>
</dbReference>
<dbReference type="GO" id="GO:0004629">
    <property type="term" value="F:phospholipase C activity"/>
    <property type="evidence" value="ECO:0000304"/>
    <property type="project" value="Reactome"/>
</dbReference>
<dbReference type="GO" id="GO:0005543">
    <property type="term" value="F:phospholipid binding"/>
    <property type="evidence" value="ECO:0007669"/>
    <property type="project" value="Ensembl"/>
</dbReference>
<dbReference type="GO" id="GO:0001580">
    <property type="term" value="P:detection of chemical stimulus involved in sensory perception of bitter taste"/>
    <property type="evidence" value="ECO:0007669"/>
    <property type="project" value="Ensembl"/>
</dbReference>
<dbReference type="GO" id="GO:0007186">
    <property type="term" value="P:G protein-coupled receptor signaling pathway"/>
    <property type="evidence" value="ECO:0000318"/>
    <property type="project" value="GO_Central"/>
</dbReference>
<dbReference type="GO" id="GO:0016042">
    <property type="term" value="P:lipid catabolic process"/>
    <property type="evidence" value="ECO:0007669"/>
    <property type="project" value="UniProtKB-KW"/>
</dbReference>
<dbReference type="GO" id="GO:0046488">
    <property type="term" value="P:phosphatidylinositol metabolic process"/>
    <property type="evidence" value="ECO:0000314"/>
    <property type="project" value="UniProtKB"/>
</dbReference>
<dbReference type="GO" id="GO:0048015">
    <property type="term" value="P:phosphatidylinositol-mediated signaling"/>
    <property type="evidence" value="ECO:0000318"/>
    <property type="project" value="GO_Central"/>
</dbReference>
<dbReference type="GO" id="GO:0007200">
    <property type="term" value="P:phospholipase C-activating G protein-coupled receptor signaling pathway"/>
    <property type="evidence" value="ECO:0000250"/>
    <property type="project" value="UniProtKB"/>
</dbReference>
<dbReference type="GO" id="GO:0006644">
    <property type="term" value="P:phospholipid metabolic process"/>
    <property type="evidence" value="ECO:0000304"/>
    <property type="project" value="ProtInc"/>
</dbReference>
<dbReference type="GO" id="GO:0051209">
    <property type="term" value="P:release of sequestered calcium ion into cytosol"/>
    <property type="evidence" value="ECO:0000318"/>
    <property type="project" value="GO_Central"/>
</dbReference>
<dbReference type="CDD" id="cd00275">
    <property type="entry name" value="C2_PLC_like"/>
    <property type="match status" value="1"/>
</dbReference>
<dbReference type="CDD" id="cd16209">
    <property type="entry name" value="EFh_PI-PLCbeta2"/>
    <property type="match status" value="1"/>
</dbReference>
<dbReference type="CDD" id="cd13361">
    <property type="entry name" value="PH_PLC_beta"/>
    <property type="match status" value="1"/>
</dbReference>
<dbReference type="CDD" id="cd08624">
    <property type="entry name" value="PI-PLCc_beta2"/>
    <property type="match status" value="1"/>
</dbReference>
<dbReference type="FunFam" id="1.10.238.10:FF:000024">
    <property type="entry name" value="1-phosphatidylinositol 4,5-bisphosphate phosphodiesterase"/>
    <property type="match status" value="1"/>
</dbReference>
<dbReference type="FunFam" id="2.30.29.240:FF:000002">
    <property type="entry name" value="1-phosphatidylinositol 4,5-bisphosphate phosphodiesterase"/>
    <property type="match status" value="1"/>
</dbReference>
<dbReference type="FunFam" id="2.60.40.150:FF:000105">
    <property type="entry name" value="1-phosphatidylinositol 4,5-bisphosphate phosphodiesterase"/>
    <property type="match status" value="1"/>
</dbReference>
<dbReference type="Gene3D" id="2.30.29.240">
    <property type="match status" value="1"/>
</dbReference>
<dbReference type="Gene3D" id="2.60.40.150">
    <property type="entry name" value="C2 domain"/>
    <property type="match status" value="1"/>
</dbReference>
<dbReference type="Gene3D" id="1.10.238.10">
    <property type="entry name" value="EF-hand"/>
    <property type="match status" value="1"/>
</dbReference>
<dbReference type="Gene3D" id="3.20.20.190">
    <property type="entry name" value="Phosphatidylinositol (PI) phosphodiesterase"/>
    <property type="match status" value="1"/>
</dbReference>
<dbReference type="Gene3D" id="1.20.1230.10">
    <property type="entry name" value="Phospholipase C beta, distal C-terminal domain"/>
    <property type="match status" value="1"/>
</dbReference>
<dbReference type="InterPro" id="IPR000008">
    <property type="entry name" value="C2_dom"/>
</dbReference>
<dbReference type="InterPro" id="IPR035892">
    <property type="entry name" value="C2_domain_sf"/>
</dbReference>
<dbReference type="InterPro" id="IPR011992">
    <property type="entry name" value="EF-hand-dom_pair"/>
</dbReference>
<dbReference type="InterPro" id="IPR001192">
    <property type="entry name" value="PI-PLC_fam"/>
</dbReference>
<dbReference type="InterPro" id="IPR016280">
    <property type="entry name" value="PLC-beta"/>
</dbReference>
<dbReference type="InterPro" id="IPR028403">
    <property type="entry name" value="PLC-beta2_cat"/>
</dbReference>
<dbReference type="InterPro" id="IPR014815">
    <property type="entry name" value="PLC-beta_C"/>
</dbReference>
<dbReference type="InterPro" id="IPR042531">
    <property type="entry name" value="PLC-beta_C_sf"/>
</dbReference>
<dbReference type="InterPro" id="IPR037862">
    <property type="entry name" value="PLC-beta_PH"/>
</dbReference>
<dbReference type="InterPro" id="IPR017946">
    <property type="entry name" value="PLC-like_Pdiesterase_TIM-brl"/>
</dbReference>
<dbReference type="InterPro" id="IPR053945">
    <property type="entry name" value="PLCB1-4-like_EFh"/>
</dbReference>
<dbReference type="InterPro" id="IPR046969">
    <property type="entry name" value="PLCbeta2_EF"/>
</dbReference>
<dbReference type="InterPro" id="IPR000909">
    <property type="entry name" value="PLipase_C_PInositol-sp_X_dom"/>
</dbReference>
<dbReference type="InterPro" id="IPR001711">
    <property type="entry name" value="PLipase_C_Pinositol-sp_Y"/>
</dbReference>
<dbReference type="PANTHER" id="PTHR10336:SF10">
    <property type="entry name" value="1-PHOSPHATIDYLINOSITOL 4,5-BISPHOSPHATE PHOSPHODIESTERASE BETA-2"/>
    <property type="match status" value="1"/>
</dbReference>
<dbReference type="PANTHER" id="PTHR10336">
    <property type="entry name" value="PHOSPHOINOSITIDE-SPECIFIC PHOSPHOLIPASE C FAMILY PROTEIN"/>
    <property type="match status" value="1"/>
</dbReference>
<dbReference type="Pfam" id="PF00168">
    <property type="entry name" value="C2"/>
    <property type="match status" value="1"/>
</dbReference>
<dbReference type="Pfam" id="PF17787">
    <property type="entry name" value="PH_14"/>
    <property type="match status" value="1"/>
</dbReference>
<dbReference type="Pfam" id="PF00388">
    <property type="entry name" value="PI-PLC-X"/>
    <property type="match status" value="1"/>
</dbReference>
<dbReference type="Pfam" id="PF00387">
    <property type="entry name" value="PI-PLC-Y"/>
    <property type="match status" value="1"/>
</dbReference>
<dbReference type="Pfam" id="PF08703">
    <property type="entry name" value="PLC-beta_C"/>
    <property type="match status" value="1"/>
</dbReference>
<dbReference type="Pfam" id="PF22631">
    <property type="entry name" value="PLCB1-4-like_EFh"/>
    <property type="match status" value="1"/>
</dbReference>
<dbReference type="PIRSF" id="PIRSF000956">
    <property type="entry name" value="PLC-beta"/>
    <property type="match status" value="1"/>
</dbReference>
<dbReference type="PRINTS" id="PR00390">
    <property type="entry name" value="PHPHLIPASEC"/>
</dbReference>
<dbReference type="SMART" id="SM00239">
    <property type="entry name" value="C2"/>
    <property type="match status" value="1"/>
</dbReference>
<dbReference type="SMART" id="SM00148">
    <property type="entry name" value="PLCXc"/>
    <property type="match status" value="1"/>
</dbReference>
<dbReference type="SMART" id="SM00149">
    <property type="entry name" value="PLCYc"/>
    <property type="match status" value="1"/>
</dbReference>
<dbReference type="SUPFAM" id="SSF69989">
    <property type="entry name" value="C-terminal domain of PLC-beta"/>
    <property type="match status" value="1"/>
</dbReference>
<dbReference type="SUPFAM" id="SSF49562">
    <property type="entry name" value="C2 domain (Calcium/lipid-binding domain, CaLB)"/>
    <property type="match status" value="1"/>
</dbReference>
<dbReference type="SUPFAM" id="SSF47473">
    <property type="entry name" value="EF-hand"/>
    <property type="match status" value="1"/>
</dbReference>
<dbReference type="SUPFAM" id="SSF50729">
    <property type="entry name" value="PH domain-like"/>
    <property type="match status" value="1"/>
</dbReference>
<dbReference type="SUPFAM" id="SSF51695">
    <property type="entry name" value="PLC-like phosphodiesterases"/>
    <property type="match status" value="1"/>
</dbReference>
<dbReference type="PROSITE" id="PS50004">
    <property type="entry name" value="C2"/>
    <property type="match status" value="1"/>
</dbReference>
<dbReference type="PROSITE" id="PS50007">
    <property type="entry name" value="PIPLC_X_DOMAIN"/>
    <property type="match status" value="1"/>
</dbReference>
<dbReference type="PROSITE" id="PS50008">
    <property type="entry name" value="PIPLC_Y_DOMAIN"/>
    <property type="match status" value="1"/>
</dbReference>
<organism>
    <name type="scientific">Homo sapiens</name>
    <name type="common">Human</name>
    <dbReference type="NCBI Taxonomy" id="9606"/>
    <lineage>
        <taxon>Eukaryota</taxon>
        <taxon>Metazoa</taxon>
        <taxon>Chordata</taxon>
        <taxon>Craniata</taxon>
        <taxon>Vertebrata</taxon>
        <taxon>Euteleostomi</taxon>
        <taxon>Mammalia</taxon>
        <taxon>Eutheria</taxon>
        <taxon>Euarchontoglires</taxon>
        <taxon>Primates</taxon>
        <taxon>Haplorrhini</taxon>
        <taxon>Catarrhini</taxon>
        <taxon>Hominidae</taxon>
        <taxon>Homo</taxon>
    </lineage>
</organism>
<comment type="function">
    <text evidence="1 8 11">The production of the second messenger molecules diacylglycerol (DAG) and inositol 1,4,5-trisphosphate (IP3) is mediated by activated phosphatidylinositol-specific phospholipase C enzymes (PubMed:1644792, PubMed:9188725). In neutrophils, participates in a phospholipase C-activating N-formyl peptide-activated GPCR (G protein-coupled receptor) signaling pathway by promoting RASGRP4 activation by DAG, to promote neutrophil functional responses (By similarity).</text>
</comment>
<comment type="catalytic activity">
    <reaction evidence="11">
        <text>a 1,2-diacyl-sn-glycero-3-phospho-(1D-myo-inositol-4,5-bisphosphate) + H2O = 1D-myo-inositol 1,4,5-trisphosphate + a 1,2-diacyl-sn-glycerol + H(+)</text>
        <dbReference type="Rhea" id="RHEA:33179"/>
        <dbReference type="ChEBI" id="CHEBI:15377"/>
        <dbReference type="ChEBI" id="CHEBI:15378"/>
        <dbReference type="ChEBI" id="CHEBI:17815"/>
        <dbReference type="ChEBI" id="CHEBI:58456"/>
        <dbReference type="ChEBI" id="CHEBI:203600"/>
        <dbReference type="EC" id="3.1.4.11"/>
    </reaction>
    <physiologicalReaction direction="left-to-right" evidence="16">
        <dbReference type="Rhea" id="RHEA:33180"/>
    </physiologicalReaction>
</comment>
<comment type="catalytic activity">
    <reaction evidence="8">
        <text>a 1,2-diacyl-sn-glycero-3-phospho-(1D-myo-inositol) + H2O = 1D-myo-inositol 1-phosphate + a 1,2-diacyl-sn-glycerol + H(+)</text>
        <dbReference type="Rhea" id="RHEA:43484"/>
        <dbReference type="ChEBI" id="CHEBI:15377"/>
        <dbReference type="ChEBI" id="CHEBI:15378"/>
        <dbReference type="ChEBI" id="CHEBI:17815"/>
        <dbReference type="ChEBI" id="CHEBI:57880"/>
        <dbReference type="ChEBI" id="CHEBI:58433"/>
    </reaction>
    <physiologicalReaction direction="left-to-right" evidence="15">
        <dbReference type="Rhea" id="RHEA:43485"/>
    </physiologicalReaction>
</comment>
<comment type="cofactor">
    <cofactor>
        <name>Ca(2+)</name>
        <dbReference type="ChEBI" id="CHEBI:29108"/>
    </cofactor>
    <text>Binds 1 Ca(2+) ion per subunit.</text>
</comment>
<comment type="subunit">
    <text evidence="8 10">Interacts with RAC1 (PubMed:1644792). Forms a complex composed of at least WDR26, a G-beta:gamma unit, and PLCB2 (PubMed:23625927).</text>
</comment>
<comment type="interaction">
    <interactant intactId="EBI-968381">
        <id>Q00722</id>
    </interactant>
    <interactant intactId="EBI-514206">
        <id>Q9UBT7</id>
        <label>CTNNAL1</label>
    </interactant>
    <organismsDiffer>false</organismsDiffer>
    <experiments>3</experiments>
</comment>
<comment type="alternative products">
    <event type="alternative splicing"/>
    <isoform>
        <id>Q00722-1</id>
        <name>1</name>
        <sequence type="displayed"/>
    </isoform>
    <isoform>
        <id>Q00722-2</id>
        <name>2</name>
        <sequence type="described" ref="VSP_035770"/>
    </isoform>
    <isoform>
        <id>Q00722-3</id>
        <name>3</name>
        <sequence type="described" ref="VSP_054490"/>
    </isoform>
</comment>
<comment type="miscellaneous">
    <text>The receptor-mediated activation of PLC-beta-2 is most effectively mediated by one G-protein alpha subunit, alpha-16.</text>
</comment>
<comment type="online information" name="Atlas of Genetics and Cytogenetics in Oncology and Haematology">
    <link uri="https://atlasgeneticsoncology.org/gene/41743/PLCB2"/>
</comment>
<keyword id="KW-0002">3D-structure</keyword>
<keyword id="KW-0025">Alternative splicing</keyword>
<keyword id="KW-0106">Calcium</keyword>
<keyword id="KW-0175">Coiled coil</keyword>
<keyword id="KW-0378">Hydrolase</keyword>
<keyword id="KW-0442">Lipid degradation</keyword>
<keyword id="KW-0443">Lipid metabolism</keyword>
<keyword id="KW-0479">Metal-binding</keyword>
<keyword id="KW-0597">Phosphoprotein</keyword>
<keyword id="KW-1267">Proteomics identification</keyword>
<keyword id="KW-1185">Reference proteome</keyword>
<keyword id="KW-0807">Transducer</keyword>